<sequence length="820" mass="91854">MERRLILWLDEISKDLLPLVGGKAAGLGEMIKAGIPVPPGFVVTSEAYRRFVFETGIAGFIKHILEETIVSGRPEEYEKASELIRSKFVRTPMPPYLRRAIVDAYRKLGTLVGVEEPRVAVRSSATVEDLPEASFAGQQETYLNVKGEEEVVEKVKTAWASLWTARALSYRDSLNIDHETALMAVVVQKMVSSRSSGVMFTIHPVTGEEDKIVIESIWGLGEYIVGGKVTPDRFVVSKSDLEILEVRISRKDKALFYDPDLNENVEIKIPESGEELEDLRRKHPAVAEVVEKYGIRPDAPSLSEKEVKELARLAIKVENHFARPMDIEWAIDFELSPPENILLLQARPETVWSRKKEEAEAKPPEEEAVPEGEVLVRGVPASPGVASGRVKVALTVEEAAKKMEKGDVLVTKMTDPDWVPYMKMASAIVTDEGGMTAHAAIVARELGIPAVVGTGDATKKLKDGMLVTVDGSRGVVYAGAVKTEEAREEEARPELGAAVAEVLSEVYPVTATKIYMNLGHPEEIDRYKHLPFEGIGLMRIEFIISSWIGYHPMYLIEQGRGVYFIDKLAEGVAKVASAIYPRPVVVRFSDFKTNEYRRLKGGEKYETLDERNPMIGWRGVSRYIHPNYEPAFRLEVRAIKKVREEWGLKNVWVMFPFVRTTWELERALKIMEEEGLSRGRDFKVWIMVEVPSTVFLADEFAKMVDGFSIGSNDLTQLVLGVDRDSGFLAKMGYFDERDPAVLRSIEILIEKAHSQGATVSICGQGPSVYPELVEFLVRRGIDSISVNPDAVVRVRRQVASIERRIMLERLEELGSRLSRL</sequence>
<organism>
    <name type="scientific">Aeropyrum pernix (strain ATCC 700893 / DSM 11879 / JCM 9820 / NBRC 100138 / K1)</name>
    <dbReference type="NCBI Taxonomy" id="272557"/>
    <lineage>
        <taxon>Archaea</taxon>
        <taxon>Thermoproteota</taxon>
        <taxon>Thermoprotei</taxon>
        <taxon>Desulfurococcales</taxon>
        <taxon>Desulfurococcaceae</taxon>
        <taxon>Aeropyrum</taxon>
    </lineage>
</organism>
<proteinExistence type="inferred from homology"/>
<comment type="function">
    <text evidence="1">Catalyzes the phosphorylation of pyruvate to phosphoenolpyruvate.</text>
</comment>
<comment type="catalytic activity">
    <reaction>
        <text>pyruvate + ATP + H2O = phosphoenolpyruvate + AMP + phosphate + 2 H(+)</text>
        <dbReference type="Rhea" id="RHEA:11364"/>
        <dbReference type="ChEBI" id="CHEBI:15361"/>
        <dbReference type="ChEBI" id="CHEBI:15377"/>
        <dbReference type="ChEBI" id="CHEBI:15378"/>
        <dbReference type="ChEBI" id="CHEBI:30616"/>
        <dbReference type="ChEBI" id="CHEBI:43474"/>
        <dbReference type="ChEBI" id="CHEBI:58702"/>
        <dbReference type="ChEBI" id="CHEBI:456215"/>
        <dbReference type="EC" id="2.7.9.2"/>
    </reaction>
</comment>
<comment type="cofactor">
    <cofactor evidence="1">
        <name>Mg(2+)</name>
        <dbReference type="ChEBI" id="CHEBI:18420"/>
    </cofactor>
</comment>
<comment type="pathway">
    <text>Carbohydrate biosynthesis; gluconeogenesis.</text>
</comment>
<comment type="domain">
    <text evidence="1">The N-terminal domain contains the ATP/Pi binding site, the central domain the pyrophosphate/phosphate carrier histidine, and the C-terminal domain the pyruvate binding site.</text>
</comment>
<comment type="miscellaneous">
    <text evidence="1">The reaction takes place in three steps, mediated by a phosphocarrier histidine residue located on the surface of the central domain. The two first partial reactions are catalyzed at an active site located on the N-terminal domain, and the third partial reaction is catalyzed at an active site located on the C-terminal domain. For catalytic turnover, the central domain swivels from the concave surface of the N-terminal domain to that of the C-terminal domain (By similarity).</text>
</comment>
<comment type="similarity">
    <text evidence="2">Belongs to the PEP-utilizing enzyme family.</text>
</comment>
<gene>
    <name type="primary">ppsA</name>
    <name type="ordered locus">APE_0650.1</name>
</gene>
<reference key="1">
    <citation type="journal article" date="1999" name="DNA Res.">
        <title>Complete genome sequence of an aerobic hyper-thermophilic crenarchaeon, Aeropyrum pernix K1.</title>
        <authorList>
            <person name="Kawarabayasi Y."/>
            <person name="Hino Y."/>
            <person name="Horikawa H."/>
            <person name="Yamazaki S."/>
            <person name="Haikawa Y."/>
            <person name="Jin-no K."/>
            <person name="Takahashi M."/>
            <person name="Sekine M."/>
            <person name="Baba S."/>
            <person name="Ankai A."/>
            <person name="Kosugi H."/>
            <person name="Hosoyama A."/>
            <person name="Fukui S."/>
            <person name="Nagai Y."/>
            <person name="Nishijima K."/>
            <person name="Nakazawa H."/>
            <person name="Takamiya M."/>
            <person name="Masuda S."/>
            <person name="Funahashi T."/>
            <person name="Tanaka T."/>
            <person name="Kudoh Y."/>
            <person name="Yamazaki J."/>
            <person name="Kushida N."/>
            <person name="Oguchi A."/>
            <person name="Aoki K."/>
            <person name="Kubota K."/>
            <person name="Nakamura Y."/>
            <person name="Nomura N."/>
            <person name="Sako Y."/>
            <person name="Kikuchi H."/>
        </authorList>
    </citation>
    <scope>NUCLEOTIDE SEQUENCE [LARGE SCALE GENOMIC DNA]</scope>
    <source>
        <strain>ATCC 700893 / DSM 11879 / JCM 9820 / NBRC 100138 / K1</strain>
    </source>
</reference>
<dbReference type="EC" id="2.7.9.2"/>
<dbReference type="EMBL" id="BA000002">
    <property type="protein sequence ID" value="BAA79621.2"/>
    <property type="molecule type" value="Genomic_DNA"/>
</dbReference>
<dbReference type="PIR" id="E72652">
    <property type="entry name" value="E72652"/>
</dbReference>
<dbReference type="RefSeq" id="WP_010865881.1">
    <property type="nucleotide sequence ID" value="NC_000854.2"/>
</dbReference>
<dbReference type="SMR" id="Q9YEC5"/>
<dbReference type="STRING" id="272557.APE_0650.1"/>
<dbReference type="EnsemblBacteria" id="BAA79621">
    <property type="protein sequence ID" value="BAA79621"/>
    <property type="gene ID" value="APE_0650.1"/>
</dbReference>
<dbReference type="GeneID" id="1444791"/>
<dbReference type="KEGG" id="ape:APE_0650.1"/>
<dbReference type="PATRIC" id="fig|272557.25.peg.469"/>
<dbReference type="eggNOG" id="arCOG01111">
    <property type="taxonomic scope" value="Archaea"/>
</dbReference>
<dbReference type="UniPathway" id="UPA00138"/>
<dbReference type="Proteomes" id="UP000002518">
    <property type="component" value="Chromosome"/>
</dbReference>
<dbReference type="GO" id="GO:0005524">
    <property type="term" value="F:ATP binding"/>
    <property type="evidence" value="ECO:0007669"/>
    <property type="project" value="UniProtKB-KW"/>
</dbReference>
<dbReference type="GO" id="GO:0046872">
    <property type="term" value="F:metal ion binding"/>
    <property type="evidence" value="ECO:0007669"/>
    <property type="project" value="UniProtKB-KW"/>
</dbReference>
<dbReference type="GO" id="GO:0008986">
    <property type="term" value="F:pyruvate, water dikinase activity"/>
    <property type="evidence" value="ECO:0007669"/>
    <property type="project" value="UniProtKB-EC"/>
</dbReference>
<dbReference type="GO" id="GO:0006094">
    <property type="term" value="P:gluconeogenesis"/>
    <property type="evidence" value="ECO:0007669"/>
    <property type="project" value="UniProtKB-UniPathway"/>
</dbReference>
<dbReference type="FunFam" id="3.30.1490.20:FF:000010">
    <property type="entry name" value="Phosphoenolpyruvate synthase"/>
    <property type="match status" value="1"/>
</dbReference>
<dbReference type="Gene3D" id="3.30.1490.20">
    <property type="entry name" value="ATP-grasp fold, A domain"/>
    <property type="match status" value="1"/>
</dbReference>
<dbReference type="Gene3D" id="3.30.470.20">
    <property type="entry name" value="ATP-grasp fold, B domain"/>
    <property type="match status" value="1"/>
</dbReference>
<dbReference type="Gene3D" id="3.20.20.60">
    <property type="entry name" value="Phosphoenolpyruvate-binding domains"/>
    <property type="match status" value="1"/>
</dbReference>
<dbReference type="Gene3D" id="3.50.30.10">
    <property type="entry name" value="Phosphohistidine domain"/>
    <property type="match status" value="1"/>
</dbReference>
<dbReference type="InterPro" id="IPR013815">
    <property type="entry name" value="ATP_grasp_subdomain_1"/>
</dbReference>
<dbReference type="InterPro" id="IPR008279">
    <property type="entry name" value="PEP-util_enz_mobile_dom"/>
</dbReference>
<dbReference type="InterPro" id="IPR006319">
    <property type="entry name" value="PEP_synth"/>
</dbReference>
<dbReference type="InterPro" id="IPR018274">
    <property type="entry name" value="PEP_util_AS"/>
</dbReference>
<dbReference type="InterPro" id="IPR000121">
    <property type="entry name" value="PEP_util_C"/>
</dbReference>
<dbReference type="InterPro" id="IPR023151">
    <property type="entry name" value="PEP_util_CS"/>
</dbReference>
<dbReference type="InterPro" id="IPR036637">
    <property type="entry name" value="Phosphohistidine_dom_sf"/>
</dbReference>
<dbReference type="InterPro" id="IPR002192">
    <property type="entry name" value="PPDK_AMP/ATP-bd"/>
</dbReference>
<dbReference type="InterPro" id="IPR015813">
    <property type="entry name" value="Pyrv/PenolPyrv_kinase-like_dom"/>
</dbReference>
<dbReference type="InterPro" id="IPR040442">
    <property type="entry name" value="Pyrv_kinase-like_dom_sf"/>
</dbReference>
<dbReference type="NCBIfam" id="TIGR01418">
    <property type="entry name" value="PEP_synth"/>
    <property type="match status" value="1"/>
</dbReference>
<dbReference type="NCBIfam" id="NF005057">
    <property type="entry name" value="PRK06464.1"/>
    <property type="match status" value="1"/>
</dbReference>
<dbReference type="PANTHER" id="PTHR43030">
    <property type="entry name" value="PHOSPHOENOLPYRUVATE SYNTHASE"/>
    <property type="match status" value="1"/>
</dbReference>
<dbReference type="PANTHER" id="PTHR43030:SF1">
    <property type="entry name" value="PHOSPHOENOLPYRUVATE SYNTHASE"/>
    <property type="match status" value="1"/>
</dbReference>
<dbReference type="Pfam" id="PF00391">
    <property type="entry name" value="PEP-utilizers"/>
    <property type="match status" value="1"/>
</dbReference>
<dbReference type="Pfam" id="PF02896">
    <property type="entry name" value="PEP-utilizers_C"/>
    <property type="match status" value="1"/>
</dbReference>
<dbReference type="Pfam" id="PF01326">
    <property type="entry name" value="PPDK_N"/>
    <property type="match status" value="1"/>
</dbReference>
<dbReference type="PIRSF" id="PIRSF000854">
    <property type="entry name" value="PEP_synthase"/>
    <property type="match status" value="1"/>
</dbReference>
<dbReference type="SUPFAM" id="SSF56059">
    <property type="entry name" value="Glutathione synthetase ATP-binding domain-like"/>
    <property type="match status" value="1"/>
</dbReference>
<dbReference type="SUPFAM" id="SSF51621">
    <property type="entry name" value="Phosphoenolpyruvate/pyruvate domain"/>
    <property type="match status" value="1"/>
</dbReference>
<dbReference type="SUPFAM" id="SSF52009">
    <property type="entry name" value="Phosphohistidine domain"/>
    <property type="match status" value="1"/>
</dbReference>
<dbReference type="PROSITE" id="PS00742">
    <property type="entry name" value="PEP_ENZYMES_2"/>
    <property type="match status" value="1"/>
</dbReference>
<dbReference type="PROSITE" id="PS00370">
    <property type="entry name" value="PEP_ENZYMES_PHOS_SITE"/>
    <property type="match status" value="1"/>
</dbReference>
<name>PPSA_AERPE</name>
<keyword id="KW-0067">ATP-binding</keyword>
<keyword id="KW-0418">Kinase</keyword>
<keyword id="KW-0460">Magnesium</keyword>
<keyword id="KW-0479">Metal-binding</keyword>
<keyword id="KW-0547">Nucleotide-binding</keyword>
<keyword id="KW-1185">Reference proteome</keyword>
<keyword id="KW-0808">Transferase</keyword>
<protein>
    <recommendedName>
        <fullName>Phosphoenolpyruvate synthase</fullName>
        <shortName>PEP synthase</shortName>
        <ecNumber>2.7.9.2</ecNumber>
    </recommendedName>
    <alternativeName>
        <fullName>Pyruvate, water dikinase</fullName>
    </alternativeName>
</protein>
<accession>Q9YEC5</accession>
<feature type="chain" id="PRO_0000147040" description="Phosphoenolpyruvate synthase">
    <location>
        <begin position="1"/>
        <end position="820"/>
    </location>
</feature>
<feature type="active site" description="Tele-phosphohistidine intermediate" evidence="1">
    <location>
        <position position="438"/>
    </location>
</feature>
<feature type="active site" description="Proton donor" evidence="1">
    <location>
        <position position="762"/>
    </location>
</feature>
<feature type="binding site" evidence="1">
    <location>
        <position position="539"/>
    </location>
    <ligand>
        <name>substrate</name>
    </ligand>
</feature>
<feature type="binding site" evidence="1">
    <location>
        <position position="587"/>
    </location>
    <ligand>
        <name>substrate</name>
    </ligand>
</feature>
<feature type="binding site" evidence="1">
    <location>
        <position position="689"/>
    </location>
    <ligand>
        <name>Mg(2+)</name>
        <dbReference type="ChEBI" id="CHEBI:18420"/>
    </ligand>
</feature>
<feature type="binding site" evidence="1">
    <location>
        <position position="689"/>
    </location>
    <ligand>
        <name>substrate</name>
    </ligand>
</feature>
<feature type="binding site" evidence="1">
    <location>
        <position position="710"/>
    </location>
    <ligand>
        <name>substrate</name>
    </ligand>
</feature>
<feature type="binding site" evidence="1">
    <location>
        <position position="711"/>
    </location>
    <ligand>
        <name>substrate</name>
    </ligand>
</feature>
<feature type="binding site" evidence="1">
    <location>
        <position position="712"/>
    </location>
    <ligand>
        <name>substrate</name>
    </ligand>
</feature>
<feature type="binding site" evidence="1">
    <location>
        <position position="713"/>
    </location>
    <ligand>
        <name>Mg(2+)</name>
        <dbReference type="ChEBI" id="CHEBI:18420"/>
    </ligand>
</feature>
<feature type="binding site" evidence="1">
    <location>
        <position position="713"/>
    </location>
    <ligand>
        <name>substrate</name>
    </ligand>
</feature>
<evidence type="ECO:0000250" key="1"/>
<evidence type="ECO:0000305" key="2"/>